<sequence>MDKRWSLQGMTALVTGGASGIGHAIVEELAGLGARIYVCDISETLLNQSLSEWEKKGFQVSGSICDVSSHSERETLMQTVSKMFDGKLNILVNNVGVVNPKPTIEYVAADFSFSISTNLESAYHLSQLSHPLLKASEFGSIIFISSVGGVVSMECGSIYSLTKGALNQLAKTLACEWARDGIRANSVAPNFIYTAMAQPFFKDADYEKSLVSRTPLGRAGEPNEVSSLVAFLCLPAASYITGQTICVDGGLTVNGFSYKPQA</sequence>
<keyword id="KW-0521">NADP</keyword>
<keyword id="KW-0560">Oxidoreductase</keyword>
<keyword id="KW-1185">Reference proteome</keyword>
<comment type="similarity">
    <text evidence="3">Belongs to the short-chain dehydrogenases/reductases (SDR) family. SDR65C subfamily.</text>
</comment>
<name>TRNHE_ARATH</name>
<feature type="chain" id="PRO_0000432369" description="Tropinone reductase homolog At2g30670">
    <location>
        <begin position="1"/>
        <end position="262"/>
    </location>
</feature>
<feature type="active site" description="Proton acceptor" evidence="2">
    <location>
        <position position="159"/>
    </location>
</feature>
<feature type="binding site" evidence="1">
    <location>
        <begin position="13"/>
        <end position="37"/>
    </location>
    <ligand>
        <name>NADP(+)</name>
        <dbReference type="ChEBI" id="CHEBI:58349"/>
    </ligand>
</feature>
<feature type="binding site" evidence="1">
    <location>
        <position position="146"/>
    </location>
    <ligand>
        <name>substrate</name>
    </ligand>
</feature>
<protein>
    <recommendedName>
        <fullName evidence="3">Tropinone reductase homolog At2g30670</fullName>
        <ecNumber evidence="3">1.1.1.-</ecNumber>
    </recommendedName>
</protein>
<dbReference type="EC" id="1.1.1.-" evidence="3"/>
<dbReference type="EMBL" id="AC002340">
    <property type="protein sequence ID" value="AAC02738.1"/>
    <property type="molecule type" value="Genomic_DNA"/>
</dbReference>
<dbReference type="EMBL" id="CP002685">
    <property type="protein sequence ID" value="AEC08425.1"/>
    <property type="molecule type" value="Genomic_DNA"/>
</dbReference>
<dbReference type="PIR" id="C84711">
    <property type="entry name" value="C84711"/>
</dbReference>
<dbReference type="RefSeq" id="NP_180625.1">
    <property type="nucleotide sequence ID" value="NM_128619.2"/>
</dbReference>
<dbReference type="SMR" id="O49332"/>
<dbReference type="FunCoup" id="O49332">
    <property type="interactions" value="43"/>
</dbReference>
<dbReference type="STRING" id="3702.O49332"/>
<dbReference type="iPTMnet" id="O49332"/>
<dbReference type="PaxDb" id="3702-AT2G30670.1"/>
<dbReference type="ProteomicsDB" id="232410"/>
<dbReference type="EnsemblPlants" id="AT2G30670.1">
    <property type="protein sequence ID" value="AT2G30670.1"/>
    <property type="gene ID" value="AT2G30670"/>
</dbReference>
<dbReference type="GeneID" id="817617"/>
<dbReference type="Gramene" id="AT2G30670.1">
    <property type="protein sequence ID" value="AT2G30670.1"/>
    <property type="gene ID" value="AT2G30670"/>
</dbReference>
<dbReference type="KEGG" id="ath:AT2G30670"/>
<dbReference type="Araport" id="AT2G30670"/>
<dbReference type="TAIR" id="AT2G30670"/>
<dbReference type="eggNOG" id="KOG0725">
    <property type="taxonomic scope" value="Eukaryota"/>
</dbReference>
<dbReference type="HOGENOM" id="CLU_010194_1_1_1"/>
<dbReference type="InParanoid" id="O49332"/>
<dbReference type="OMA" id="GHEQWSK"/>
<dbReference type="PhylomeDB" id="O49332"/>
<dbReference type="BioCyc" id="ARA:AT2G30670-MONOMER"/>
<dbReference type="PRO" id="PR:O49332"/>
<dbReference type="Proteomes" id="UP000006548">
    <property type="component" value="Chromosome 2"/>
</dbReference>
<dbReference type="ExpressionAtlas" id="O49332">
    <property type="expression patterns" value="baseline and differential"/>
</dbReference>
<dbReference type="GO" id="GO:0016491">
    <property type="term" value="F:oxidoreductase activity"/>
    <property type="evidence" value="ECO:0007669"/>
    <property type="project" value="UniProtKB-KW"/>
</dbReference>
<dbReference type="FunFam" id="3.40.50.720:FF:000084">
    <property type="entry name" value="Short-chain dehydrogenase reductase"/>
    <property type="match status" value="1"/>
</dbReference>
<dbReference type="Gene3D" id="3.40.50.720">
    <property type="entry name" value="NAD(P)-binding Rossmann-like Domain"/>
    <property type="match status" value="1"/>
</dbReference>
<dbReference type="InterPro" id="IPR036291">
    <property type="entry name" value="NAD(P)-bd_dom_sf"/>
</dbReference>
<dbReference type="InterPro" id="IPR002347">
    <property type="entry name" value="SDR_fam"/>
</dbReference>
<dbReference type="InterPro" id="IPR045000">
    <property type="entry name" value="TR"/>
</dbReference>
<dbReference type="PANTHER" id="PTHR42898:SF20">
    <property type="entry name" value="3-OXOACYL-[ACYL-CARRIER-PROTEIN] REDUCTASE"/>
    <property type="match status" value="1"/>
</dbReference>
<dbReference type="PANTHER" id="PTHR42898">
    <property type="entry name" value="TROPINONE REDUCTASE"/>
    <property type="match status" value="1"/>
</dbReference>
<dbReference type="Pfam" id="PF13561">
    <property type="entry name" value="adh_short_C2"/>
    <property type="match status" value="1"/>
</dbReference>
<dbReference type="PRINTS" id="PR00081">
    <property type="entry name" value="GDHRDH"/>
</dbReference>
<dbReference type="PRINTS" id="PR00080">
    <property type="entry name" value="SDRFAMILY"/>
</dbReference>
<dbReference type="SUPFAM" id="SSF51735">
    <property type="entry name" value="NAD(P)-binding Rossmann-fold domains"/>
    <property type="match status" value="1"/>
</dbReference>
<evidence type="ECO:0000250" key="1">
    <source>
        <dbReference type="UniProtKB" id="P50162"/>
    </source>
</evidence>
<evidence type="ECO:0000255" key="2">
    <source>
        <dbReference type="PROSITE-ProRule" id="PRU10001"/>
    </source>
</evidence>
<evidence type="ECO:0000305" key="3"/>
<evidence type="ECO:0000312" key="4">
    <source>
        <dbReference type="Araport" id="AT2G30670"/>
    </source>
</evidence>
<evidence type="ECO:0000312" key="5">
    <source>
        <dbReference type="EMBL" id="AAC02738.1"/>
    </source>
</evidence>
<evidence type="ECO:0000312" key="6">
    <source>
        <dbReference type="Proteomes" id="UP000006548"/>
    </source>
</evidence>
<reference key="1">
    <citation type="journal article" date="1999" name="Nature">
        <title>Sequence and analysis of chromosome 2 of the plant Arabidopsis thaliana.</title>
        <authorList>
            <person name="Lin X."/>
            <person name="Kaul S."/>
            <person name="Rounsley S.D."/>
            <person name="Shea T.P."/>
            <person name="Benito M.-I."/>
            <person name="Town C.D."/>
            <person name="Fujii C.Y."/>
            <person name="Mason T.M."/>
            <person name="Bowman C.L."/>
            <person name="Barnstead M.E."/>
            <person name="Feldblyum T.V."/>
            <person name="Buell C.R."/>
            <person name="Ketchum K.A."/>
            <person name="Lee J.J."/>
            <person name="Ronning C.M."/>
            <person name="Koo H.L."/>
            <person name="Moffat K.S."/>
            <person name="Cronin L.A."/>
            <person name="Shen M."/>
            <person name="Pai G."/>
            <person name="Van Aken S."/>
            <person name="Umayam L."/>
            <person name="Tallon L.J."/>
            <person name="Gill J.E."/>
            <person name="Adams M.D."/>
            <person name="Carrera A.J."/>
            <person name="Creasy T.H."/>
            <person name="Goodman H.M."/>
            <person name="Somerville C.R."/>
            <person name="Copenhaver G.P."/>
            <person name="Preuss D."/>
            <person name="Nierman W.C."/>
            <person name="White O."/>
            <person name="Eisen J.A."/>
            <person name="Salzberg S.L."/>
            <person name="Fraser C.M."/>
            <person name="Venter J.C."/>
        </authorList>
    </citation>
    <scope>NUCLEOTIDE SEQUENCE [LARGE SCALE GENOMIC DNA]</scope>
    <source>
        <strain>cv. Columbia</strain>
    </source>
</reference>
<reference key="2">
    <citation type="journal article" date="2017" name="Plant J.">
        <title>Araport11: a complete reannotation of the Arabidopsis thaliana reference genome.</title>
        <authorList>
            <person name="Cheng C.Y."/>
            <person name="Krishnakumar V."/>
            <person name="Chan A.P."/>
            <person name="Thibaud-Nissen F."/>
            <person name="Schobel S."/>
            <person name="Town C.D."/>
        </authorList>
    </citation>
    <scope>GENOME REANNOTATION</scope>
    <source>
        <strain>cv. Columbia</strain>
    </source>
</reference>
<reference key="3">
    <citation type="journal article" date="2009" name="Chem. Biol. Interact.">
        <title>The SDR (short-chain dehydrogenase/reductase and related enzymes) nomenclature initiative.</title>
        <authorList>
            <person name="Persson B."/>
            <person name="Kallberg Y."/>
            <person name="Bray J.E."/>
            <person name="Bruford E."/>
            <person name="Dellaporta S.L."/>
            <person name="Favia A.D."/>
            <person name="Duarte R.G."/>
            <person name="Joernvall H."/>
            <person name="Kavanagh K.L."/>
            <person name="Kedishvili N."/>
            <person name="Kisiela M."/>
            <person name="Maser E."/>
            <person name="Mindnich R."/>
            <person name="Orchard S."/>
            <person name="Penning T.M."/>
            <person name="Thornton J.M."/>
            <person name="Adamski J."/>
            <person name="Oppermann U."/>
        </authorList>
    </citation>
    <scope>GENE FAMILY</scope>
    <scope>NOMENCLATURE</scope>
</reference>
<proteinExistence type="inferred from homology"/>
<accession>O49332</accession>
<gene>
    <name evidence="4" type="ordered locus">At2g30670</name>
    <name evidence="5" type="ORF">T11J7.6</name>
</gene>
<organism evidence="6">
    <name type="scientific">Arabidopsis thaliana</name>
    <name type="common">Mouse-ear cress</name>
    <dbReference type="NCBI Taxonomy" id="3702"/>
    <lineage>
        <taxon>Eukaryota</taxon>
        <taxon>Viridiplantae</taxon>
        <taxon>Streptophyta</taxon>
        <taxon>Embryophyta</taxon>
        <taxon>Tracheophyta</taxon>
        <taxon>Spermatophyta</taxon>
        <taxon>Magnoliopsida</taxon>
        <taxon>eudicotyledons</taxon>
        <taxon>Gunneridae</taxon>
        <taxon>Pentapetalae</taxon>
        <taxon>rosids</taxon>
        <taxon>malvids</taxon>
        <taxon>Brassicales</taxon>
        <taxon>Brassicaceae</taxon>
        <taxon>Camelineae</taxon>
        <taxon>Arabidopsis</taxon>
    </lineage>
</organism>